<evidence type="ECO:0000255" key="1">
    <source>
        <dbReference type="PROSITE-ProRule" id="PRU00116"/>
    </source>
</evidence>
<evidence type="ECO:0000256" key="2">
    <source>
        <dbReference type="SAM" id="MobiDB-lite"/>
    </source>
</evidence>
<evidence type="ECO:0000269" key="3">
    <source>
    </source>
</evidence>
<evidence type="ECO:0000269" key="4">
    <source ref="2"/>
</evidence>
<evidence type="ECO:0000303" key="5">
    <source>
    </source>
</evidence>
<evidence type="ECO:0000303" key="6">
    <source>
    </source>
</evidence>
<evidence type="ECO:0000305" key="7"/>
<evidence type="ECO:0007744" key="8">
    <source>
    </source>
</evidence>
<comment type="interaction">
    <interactant intactId="EBI-12206419">
        <id>Q4KMZ1</id>
    </interactant>
    <interactant intactId="EBI-949834">
        <id>Q8TD31</id>
        <label>CCHCR1</label>
    </interactant>
    <organismsDiffer>false</organismsDiffer>
    <experiments>3</experiments>
</comment>
<comment type="interaction">
    <interactant intactId="EBI-12206419">
        <id>Q4KMZ1</id>
    </interactant>
    <interactant intactId="EBI-10175300">
        <id>Q8TD31-3</id>
        <label>CCHCR1</label>
    </interactant>
    <organismsDiffer>false</organismsDiffer>
    <experiments>3</experiments>
</comment>
<comment type="interaction">
    <interactant intactId="EBI-12206419">
        <id>Q4KMZ1</id>
    </interactant>
    <interactant intactId="EBI-7116203">
        <id>O75031</id>
        <label>HSF2BP</label>
    </interactant>
    <organismsDiffer>false</organismsDiffer>
    <experiments>3</experiments>
</comment>
<comment type="interaction">
    <interactant intactId="EBI-12206419">
        <id>Q4KMZ1</id>
    </interactant>
    <interactant intactId="EBI-751001">
        <id>Q14145</id>
        <label>KEAP1</label>
    </interactant>
    <organismsDiffer>false</organismsDiffer>
    <experiments>3</experiments>
</comment>
<comment type="interaction">
    <interactant intactId="EBI-12206419">
        <id>Q4KMZ1</id>
    </interactant>
    <interactant intactId="EBI-11336487">
        <id>Q2NL68</id>
        <label>PROSER3</label>
    </interactant>
    <organismsDiffer>false</organismsDiffer>
    <experiments>3</experiments>
</comment>
<comment type="alternative products">
    <event type="alternative splicing"/>
    <isoform>
        <id>Q4KMZ1-1</id>
        <name>1</name>
        <sequence type="displayed"/>
    </isoform>
    <isoform>
        <id>Q4KMZ1-2</id>
        <name>2</name>
        <sequence type="described" ref="VSP_024176"/>
    </isoform>
    <isoform>
        <id>Q4KMZ1-3</id>
        <name>3</name>
        <sequence type="described" ref="VSP_046123"/>
    </isoform>
</comment>
<comment type="sequence caution" evidence="7">
    <conflict type="erroneous termination">
        <sequence resource="EMBL" id="AK307853"/>
    </conflict>
    <text>Truncated C-terminus.</text>
</comment>
<name>IQCC_HUMAN</name>
<dbReference type="EMBL" id="AK001409">
    <property type="protein sequence ID" value="BAA91674.1"/>
    <property type="molecule type" value="mRNA"/>
</dbReference>
<dbReference type="EMBL" id="AK307853">
    <property type="status" value="NOT_ANNOTATED_CDS"/>
    <property type="molecule type" value="mRNA"/>
</dbReference>
<dbReference type="EMBL" id="AK223272">
    <property type="protein sequence ID" value="BAD96992.1"/>
    <property type="molecule type" value="mRNA"/>
</dbReference>
<dbReference type="EMBL" id="AL049795">
    <property type="status" value="NOT_ANNOTATED_CDS"/>
    <property type="molecule type" value="Genomic_DNA"/>
</dbReference>
<dbReference type="EMBL" id="BC098250">
    <property type="protein sequence ID" value="AAH98250.1"/>
    <property type="molecule type" value="mRNA"/>
</dbReference>
<dbReference type="EMBL" id="BC098260">
    <property type="protein sequence ID" value="AAH98260.1"/>
    <property type="molecule type" value="mRNA"/>
</dbReference>
<dbReference type="EMBL" id="BC098317">
    <property type="protein sequence ID" value="AAH98317.1"/>
    <property type="molecule type" value="mRNA"/>
</dbReference>
<dbReference type="EMBL" id="BC098366">
    <property type="protein sequence ID" value="AAH98366.1"/>
    <property type="molecule type" value="mRNA"/>
</dbReference>
<dbReference type="CCDS" id="CCDS355.1">
    <molecule id="Q4KMZ1-1"/>
</dbReference>
<dbReference type="CCDS" id="CCDS53293.1">
    <molecule id="Q4KMZ1-3"/>
</dbReference>
<dbReference type="RefSeq" id="NP_001153514.1">
    <molecule id="Q4KMZ1-3"/>
    <property type="nucleotide sequence ID" value="NM_001160042.2"/>
</dbReference>
<dbReference type="RefSeq" id="NP_060604.2">
    <molecule id="Q4KMZ1-1"/>
    <property type="nucleotide sequence ID" value="NM_018134.3"/>
</dbReference>
<dbReference type="BioGRID" id="120843">
    <property type="interactions" value="16"/>
</dbReference>
<dbReference type="FunCoup" id="Q4KMZ1">
    <property type="interactions" value="160"/>
</dbReference>
<dbReference type="IntAct" id="Q4KMZ1">
    <property type="interactions" value="8"/>
</dbReference>
<dbReference type="STRING" id="9606.ENSP00000442291"/>
<dbReference type="GlyGen" id="Q4KMZ1">
    <property type="glycosylation" value="1 site, 1 O-linked glycan (1 site)"/>
</dbReference>
<dbReference type="iPTMnet" id="Q4KMZ1"/>
<dbReference type="PhosphoSitePlus" id="Q4KMZ1"/>
<dbReference type="BioMuta" id="IQCC"/>
<dbReference type="DMDM" id="143339942"/>
<dbReference type="jPOST" id="Q4KMZ1"/>
<dbReference type="MassIVE" id="Q4KMZ1"/>
<dbReference type="PaxDb" id="9606-ENSP00000442291"/>
<dbReference type="PeptideAtlas" id="Q4KMZ1"/>
<dbReference type="ProteomicsDB" id="27589"/>
<dbReference type="ProteomicsDB" id="62207">
    <molecule id="Q4KMZ1-1"/>
</dbReference>
<dbReference type="ProteomicsDB" id="62208">
    <molecule id="Q4KMZ1-2"/>
</dbReference>
<dbReference type="Antibodypedia" id="31251">
    <property type="antibodies" value="94 antibodies from 15 providers"/>
</dbReference>
<dbReference type="DNASU" id="55721"/>
<dbReference type="Ensembl" id="ENST00000291358.11">
    <molecule id="Q4KMZ1-1"/>
    <property type="protein sequence ID" value="ENSP00000291358.6"/>
    <property type="gene ID" value="ENSG00000160051.12"/>
</dbReference>
<dbReference type="Ensembl" id="ENST00000537469.2">
    <molecule id="Q4KMZ1-3"/>
    <property type="protein sequence ID" value="ENSP00000442291.1"/>
    <property type="gene ID" value="ENSG00000160051.12"/>
</dbReference>
<dbReference type="GeneID" id="55721"/>
<dbReference type="KEGG" id="hsa:55721"/>
<dbReference type="MANE-Select" id="ENST00000291358.11">
    <property type="protein sequence ID" value="ENSP00000291358.6"/>
    <property type="RefSeq nucleotide sequence ID" value="NM_018134.3"/>
    <property type="RefSeq protein sequence ID" value="NP_060604.2"/>
</dbReference>
<dbReference type="UCSC" id="uc001bum.3">
    <molecule id="Q4KMZ1-1"/>
    <property type="organism name" value="human"/>
</dbReference>
<dbReference type="AGR" id="HGNC:25545"/>
<dbReference type="CTD" id="55721"/>
<dbReference type="DisGeNET" id="55721"/>
<dbReference type="GeneCards" id="IQCC"/>
<dbReference type="HGNC" id="HGNC:25545">
    <property type="gene designation" value="IQCC"/>
</dbReference>
<dbReference type="HPA" id="ENSG00000160051">
    <property type="expression patterns" value="Low tissue specificity"/>
</dbReference>
<dbReference type="MalaCards" id="IQCC"/>
<dbReference type="neXtProt" id="NX_Q4KMZ1"/>
<dbReference type="OpenTargets" id="ENSG00000160051"/>
<dbReference type="PharmGKB" id="PA134868161"/>
<dbReference type="VEuPathDB" id="HostDB:ENSG00000160051"/>
<dbReference type="eggNOG" id="ENOG502S8YC">
    <property type="taxonomic scope" value="Eukaryota"/>
</dbReference>
<dbReference type="GeneTree" id="ENSGT00390000017195"/>
<dbReference type="HOGENOM" id="CLU_046548_0_0_1"/>
<dbReference type="InParanoid" id="Q4KMZ1"/>
<dbReference type="OMA" id="DHRAQTC"/>
<dbReference type="OrthoDB" id="6161953at2759"/>
<dbReference type="PAN-GO" id="Q4KMZ1">
    <property type="GO annotations" value="0 GO annotations based on evolutionary models"/>
</dbReference>
<dbReference type="PhylomeDB" id="Q4KMZ1"/>
<dbReference type="TreeFam" id="TF330928"/>
<dbReference type="PathwayCommons" id="Q4KMZ1"/>
<dbReference type="SignaLink" id="Q4KMZ1"/>
<dbReference type="BioGRID-ORCS" id="55721">
    <property type="hits" value="40 hits in 1156 CRISPR screens"/>
</dbReference>
<dbReference type="GenomeRNAi" id="55721"/>
<dbReference type="Pharos" id="Q4KMZ1">
    <property type="development level" value="Tdark"/>
</dbReference>
<dbReference type="PRO" id="PR:Q4KMZ1"/>
<dbReference type="Proteomes" id="UP000005640">
    <property type="component" value="Chromosome 1"/>
</dbReference>
<dbReference type="RNAct" id="Q4KMZ1">
    <property type="molecule type" value="protein"/>
</dbReference>
<dbReference type="Bgee" id="ENSG00000160051">
    <property type="expression patterns" value="Expressed in vena cava and 202 other cell types or tissues"/>
</dbReference>
<dbReference type="InterPro" id="IPR042506">
    <property type="entry name" value="IQCC"/>
</dbReference>
<dbReference type="PANTHER" id="PTHR16049">
    <property type="entry name" value="IQ DOMAIN-CONTAINING PROTEIN C"/>
    <property type="match status" value="1"/>
</dbReference>
<dbReference type="PANTHER" id="PTHR16049:SF8">
    <property type="entry name" value="IQ DOMAIN-CONTAINING PROTEIN C"/>
    <property type="match status" value="1"/>
</dbReference>
<dbReference type="PROSITE" id="PS50096">
    <property type="entry name" value="IQ"/>
    <property type="match status" value="1"/>
</dbReference>
<protein>
    <recommendedName>
        <fullName>IQ domain-containing protein C</fullName>
    </recommendedName>
</protein>
<organism>
    <name type="scientific">Homo sapiens</name>
    <name type="common">Human</name>
    <dbReference type="NCBI Taxonomy" id="9606"/>
    <lineage>
        <taxon>Eukaryota</taxon>
        <taxon>Metazoa</taxon>
        <taxon>Chordata</taxon>
        <taxon>Craniata</taxon>
        <taxon>Vertebrata</taxon>
        <taxon>Euteleostomi</taxon>
        <taxon>Mammalia</taxon>
        <taxon>Eutheria</taxon>
        <taxon>Euarchontoglires</taxon>
        <taxon>Primates</taxon>
        <taxon>Haplorrhini</taxon>
        <taxon>Catarrhini</taxon>
        <taxon>Hominidae</taxon>
        <taxon>Homo</taxon>
    </lineage>
</organism>
<accession>Q4KMZ1</accession>
<accession>F5H7T8</accession>
<accession>Q4KMS3</accession>
<accession>Q4KMZ5</accession>
<accession>Q53FL2</accession>
<accession>Q5TFJ8</accession>
<accession>Q9NVS3</accession>
<feature type="chain" id="PRO_0000282545" description="IQ domain-containing protein C">
    <location>
        <begin position="1"/>
        <end position="466"/>
    </location>
</feature>
<feature type="domain" description="IQ" evidence="1">
    <location>
        <begin position="6"/>
        <end position="35"/>
    </location>
</feature>
<feature type="region of interest" description="Disordered" evidence="2">
    <location>
        <begin position="105"/>
        <end position="157"/>
    </location>
</feature>
<feature type="region of interest" description="Disordered" evidence="2">
    <location>
        <begin position="214"/>
        <end position="233"/>
    </location>
</feature>
<feature type="region of interest" description="Disordered" evidence="2">
    <location>
        <begin position="238"/>
        <end position="310"/>
    </location>
</feature>
<feature type="region of interest" description="Disordered" evidence="2">
    <location>
        <begin position="394"/>
        <end position="466"/>
    </location>
</feature>
<feature type="compositionally biased region" description="Basic and acidic residues" evidence="2">
    <location>
        <begin position="132"/>
        <end position="153"/>
    </location>
</feature>
<feature type="compositionally biased region" description="Polar residues" evidence="2">
    <location>
        <begin position="282"/>
        <end position="293"/>
    </location>
</feature>
<feature type="compositionally biased region" description="Basic and acidic residues" evidence="2">
    <location>
        <begin position="297"/>
        <end position="306"/>
    </location>
</feature>
<feature type="modified residue" description="Phosphoserine" evidence="8">
    <location>
        <position position="438"/>
    </location>
</feature>
<feature type="splice variant" id="VSP_046123" description="In isoform 3." evidence="5">
    <original>Q</original>
    <variation>QVRGRARGSQDFSFREIMGSRTWTSQRDATTFSPLTARQPLEIPAVPNRAEESWDPRTPCPARPHSHHTLAPDQGNGKSLK</variation>
    <location>
        <position position="14"/>
    </location>
</feature>
<feature type="splice variant" id="VSP_024176" description="In isoform 2." evidence="6">
    <location>
        <begin position="231"/>
        <end position="466"/>
    </location>
</feature>
<feature type="sequence variant" id="VAR_031411" description="In dbSNP:rs3903683." evidence="4">
    <original>F</original>
    <variation>C</variation>
    <location>
        <position position="209"/>
    </location>
</feature>
<feature type="sequence variant" id="VAR_031412" description="In dbSNP:rs12032332." evidence="3">
    <original>C</original>
    <variation>Y</variation>
    <location>
        <position position="217"/>
    </location>
</feature>
<feature type="sequence variant" id="VAR_031413" description="In dbSNP:rs41306593." evidence="3">
    <original>P</original>
    <variation>L</variation>
    <location>
        <position position="464"/>
    </location>
</feature>
<feature type="sequence conflict" description="In Ref. 1; BAA91674." evidence="7" ref="1">
    <original>P</original>
    <variation>S</variation>
    <location>
        <position position="201"/>
    </location>
</feature>
<proteinExistence type="evidence at protein level"/>
<sequence>MEPELLVRKVSALQACVRGFLVRRQFQSLRAEYEAIVREVEGDLGTLQWTEGRIPRPRFLPEKAKSHQTWKAGDRVANPEQGLWNHFPCEESEGEATWEEMVLKKSGESSANQGSLCRDHSSWLQMKQNRKPSQEKTRDTTRMENPEATDQRLPHSQPQLQELQYHRSHLAMELLWLQQAINSRKEYLLLKQTLRSPEAGPIREEPRVFLEHGEQACERDQSQPSAPLEDQSYRDRTTGELEQEDDSCHRVKSPHRSPGSLATTQKNIAGAKCREPCYSKSGPPSSIPSNSQALGDRLTKGPDDGRQTFGGTCLLQMKILEDQTPRGLKPRNHCPRKSRTQLSALYEDSNIKEMSPRKLDHKEPDCRTVRTQELGLSEDHIIWDGTLGGPEHSVLDLWRTKPPKGQAPTDRSSRDGTSNEPSHEGQKKQRTIPWRSKSPEILSSTKAGCTGEEQWRGRPWKTEPPG</sequence>
<gene>
    <name type="primary">IQCC</name>
</gene>
<keyword id="KW-0025">Alternative splicing</keyword>
<keyword id="KW-0597">Phosphoprotein</keyword>
<keyword id="KW-1267">Proteomics identification</keyword>
<keyword id="KW-1185">Reference proteome</keyword>
<reference key="1">
    <citation type="journal article" date="2004" name="Nat. Genet.">
        <title>Complete sequencing and characterization of 21,243 full-length human cDNAs.</title>
        <authorList>
            <person name="Ota T."/>
            <person name="Suzuki Y."/>
            <person name="Nishikawa T."/>
            <person name="Otsuki T."/>
            <person name="Sugiyama T."/>
            <person name="Irie R."/>
            <person name="Wakamatsu A."/>
            <person name="Hayashi K."/>
            <person name="Sato H."/>
            <person name="Nagai K."/>
            <person name="Kimura K."/>
            <person name="Makita H."/>
            <person name="Sekine M."/>
            <person name="Obayashi M."/>
            <person name="Nishi T."/>
            <person name="Shibahara T."/>
            <person name="Tanaka T."/>
            <person name="Ishii S."/>
            <person name="Yamamoto J."/>
            <person name="Saito K."/>
            <person name="Kawai Y."/>
            <person name="Isono Y."/>
            <person name="Nakamura Y."/>
            <person name="Nagahari K."/>
            <person name="Murakami K."/>
            <person name="Yasuda T."/>
            <person name="Iwayanagi T."/>
            <person name="Wagatsuma M."/>
            <person name="Shiratori A."/>
            <person name="Sudo H."/>
            <person name="Hosoiri T."/>
            <person name="Kaku Y."/>
            <person name="Kodaira H."/>
            <person name="Kondo H."/>
            <person name="Sugawara M."/>
            <person name="Takahashi M."/>
            <person name="Kanda K."/>
            <person name="Yokoi T."/>
            <person name="Furuya T."/>
            <person name="Kikkawa E."/>
            <person name="Omura Y."/>
            <person name="Abe K."/>
            <person name="Kamihara K."/>
            <person name="Katsuta N."/>
            <person name="Sato K."/>
            <person name="Tanikawa M."/>
            <person name="Yamazaki M."/>
            <person name="Ninomiya K."/>
            <person name="Ishibashi T."/>
            <person name="Yamashita H."/>
            <person name="Murakawa K."/>
            <person name="Fujimori K."/>
            <person name="Tanai H."/>
            <person name="Kimata M."/>
            <person name="Watanabe M."/>
            <person name="Hiraoka S."/>
            <person name="Chiba Y."/>
            <person name="Ishida S."/>
            <person name="Ono Y."/>
            <person name="Takiguchi S."/>
            <person name="Watanabe S."/>
            <person name="Yosida M."/>
            <person name="Hotuta T."/>
            <person name="Kusano J."/>
            <person name="Kanehori K."/>
            <person name="Takahashi-Fujii A."/>
            <person name="Hara H."/>
            <person name="Tanase T.-O."/>
            <person name="Nomura Y."/>
            <person name="Togiya S."/>
            <person name="Komai F."/>
            <person name="Hara R."/>
            <person name="Takeuchi K."/>
            <person name="Arita M."/>
            <person name="Imose N."/>
            <person name="Musashino K."/>
            <person name="Yuuki H."/>
            <person name="Oshima A."/>
            <person name="Sasaki N."/>
            <person name="Aotsuka S."/>
            <person name="Yoshikawa Y."/>
            <person name="Matsunawa H."/>
            <person name="Ichihara T."/>
            <person name="Shiohata N."/>
            <person name="Sano S."/>
            <person name="Moriya S."/>
            <person name="Momiyama H."/>
            <person name="Satoh N."/>
            <person name="Takami S."/>
            <person name="Terashima Y."/>
            <person name="Suzuki O."/>
            <person name="Nakagawa S."/>
            <person name="Senoh A."/>
            <person name="Mizoguchi H."/>
            <person name="Goto Y."/>
            <person name="Shimizu F."/>
            <person name="Wakebe H."/>
            <person name="Hishigaki H."/>
            <person name="Watanabe T."/>
            <person name="Sugiyama A."/>
            <person name="Takemoto M."/>
            <person name="Kawakami B."/>
            <person name="Yamazaki M."/>
            <person name="Watanabe K."/>
            <person name="Kumagai A."/>
            <person name="Itakura S."/>
            <person name="Fukuzumi Y."/>
            <person name="Fujimori Y."/>
            <person name="Komiyama M."/>
            <person name="Tashiro H."/>
            <person name="Tanigami A."/>
            <person name="Fujiwara T."/>
            <person name="Ono T."/>
            <person name="Yamada K."/>
            <person name="Fujii Y."/>
            <person name="Ozaki K."/>
            <person name="Hirao M."/>
            <person name="Ohmori Y."/>
            <person name="Kawabata A."/>
            <person name="Hikiji T."/>
            <person name="Kobatake N."/>
            <person name="Inagaki H."/>
            <person name="Ikema Y."/>
            <person name="Okamoto S."/>
            <person name="Okitani R."/>
            <person name="Kawakami T."/>
            <person name="Noguchi S."/>
            <person name="Itoh T."/>
            <person name="Shigeta K."/>
            <person name="Senba T."/>
            <person name="Matsumura K."/>
            <person name="Nakajima Y."/>
            <person name="Mizuno T."/>
            <person name="Morinaga M."/>
            <person name="Sasaki M."/>
            <person name="Togashi T."/>
            <person name="Oyama M."/>
            <person name="Hata H."/>
            <person name="Watanabe M."/>
            <person name="Komatsu T."/>
            <person name="Mizushima-Sugano J."/>
            <person name="Satoh T."/>
            <person name="Shirai Y."/>
            <person name="Takahashi Y."/>
            <person name="Nakagawa K."/>
            <person name="Okumura K."/>
            <person name="Nagase T."/>
            <person name="Nomura N."/>
            <person name="Kikuchi H."/>
            <person name="Masuho Y."/>
            <person name="Yamashita R."/>
            <person name="Nakai K."/>
            <person name="Yada T."/>
            <person name="Nakamura Y."/>
            <person name="Ohara O."/>
            <person name="Isogai T."/>
            <person name="Sugano S."/>
        </authorList>
    </citation>
    <scope>NUCLEOTIDE SEQUENCE [LARGE SCALE MRNA] (ISOFORM 1)</scope>
    <scope>NUCLEOTIDE SEQUENCE [LARGE SCALE MRNA] OF 1-433 (ISOFORM 3)</scope>
    <source>
        <tissue>Caudate nucleus</tissue>
    </source>
</reference>
<reference key="2">
    <citation type="submission" date="2005-04" db="EMBL/GenBank/DDBJ databases">
        <authorList>
            <person name="Suzuki Y."/>
            <person name="Sugano S."/>
            <person name="Totoki Y."/>
            <person name="Toyoda A."/>
            <person name="Takeda T."/>
            <person name="Sakaki Y."/>
            <person name="Tanaka A."/>
            <person name="Yokoyama S."/>
        </authorList>
    </citation>
    <scope>NUCLEOTIDE SEQUENCE [LARGE SCALE MRNA] (ISOFORM 1)</scope>
    <scope>VARIANT CYS-209</scope>
    <source>
        <tissue>Synovium</tissue>
    </source>
</reference>
<reference key="3">
    <citation type="journal article" date="2006" name="Nature">
        <title>The DNA sequence and biological annotation of human chromosome 1.</title>
        <authorList>
            <person name="Gregory S.G."/>
            <person name="Barlow K.F."/>
            <person name="McLay K.E."/>
            <person name="Kaul R."/>
            <person name="Swarbreck D."/>
            <person name="Dunham A."/>
            <person name="Scott C.E."/>
            <person name="Howe K.L."/>
            <person name="Woodfine K."/>
            <person name="Spencer C.C.A."/>
            <person name="Jones M.C."/>
            <person name="Gillson C."/>
            <person name="Searle S."/>
            <person name="Zhou Y."/>
            <person name="Kokocinski F."/>
            <person name="McDonald L."/>
            <person name="Evans R."/>
            <person name="Phillips K."/>
            <person name="Atkinson A."/>
            <person name="Cooper R."/>
            <person name="Jones C."/>
            <person name="Hall R.E."/>
            <person name="Andrews T.D."/>
            <person name="Lloyd C."/>
            <person name="Ainscough R."/>
            <person name="Almeida J.P."/>
            <person name="Ambrose K.D."/>
            <person name="Anderson F."/>
            <person name="Andrew R.W."/>
            <person name="Ashwell R.I.S."/>
            <person name="Aubin K."/>
            <person name="Babbage A.K."/>
            <person name="Bagguley C.L."/>
            <person name="Bailey J."/>
            <person name="Beasley H."/>
            <person name="Bethel G."/>
            <person name="Bird C.P."/>
            <person name="Bray-Allen S."/>
            <person name="Brown J.Y."/>
            <person name="Brown A.J."/>
            <person name="Buckley D."/>
            <person name="Burton J."/>
            <person name="Bye J."/>
            <person name="Carder C."/>
            <person name="Chapman J.C."/>
            <person name="Clark S.Y."/>
            <person name="Clarke G."/>
            <person name="Clee C."/>
            <person name="Cobley V."/>
            <person name="Collier R.E."/>
            <person name="Corby N."/>
            <person name="Coville G.J."/>
            <person name="Davies J."/>
            <person name="Deadman R."/>
            <person name="Dunn M."/>
            <person name="Earthrowl M."/>
            <person name="Ellington A.G."/>
            <person name="Errington H."/>
            <person name="Frankish A."/>
            <person name="Frankland J."/>
            <person name="French L."/>
            <person name="Garner P."/>
            <person name="Garnett J."/>
            <person name="Gay L."/>
            <person name="Ghori M.R.J."/>
            <person name="Gibson R."/>
            <person name="Gilby L.M."/>
            <person name="Gillett W."/>
            <person name="Glithero R.J."/>
            <person name="Grafham D.V."/>
            <person name="Griffiths C."/>
            <person name="Griffiths-Jones S."/>
            <person name="Grocock R."/>
            <person name="Hammond S."/>
            <person name="Harrison E.S.I."/>
            <person name="Hart E."/>
            <person name="Haugen E."/>
            <person name="Heath P.D."/>
            <person name="Holmes S."/>
            <person name="Holt K."/>
            <person name="Howden P.J."/>
            <person name="Hunt A.R."/>
            <person name="Hunt S.E."/>
            <person name="Hunter G."/>
            <person name="Isherwood J."/>
            <person name="James R."/>
            <person name="Johnson C."/>
            <person name="Johnson D."/>
            <person name="Joy A."/>
            <person name="Kay M."/>
            <person name="Kershaw J.K."/>
            <person name="Kibukawa M."/>
            <person name="Kimberley A.M."/>
            <person name="King A."/>
            <person name="Knights A.J."/>
            <person name="Lad H."/>
            <person name="Laird G."/>
            <person name="Lawlor S."/>
            <person name="Leongamornlert D.A."/>
            <person name="Lloyd D.M."/>
            <person name="Loveland J."/>
            <person name="Lovell J."/>
            <person name="Lush M.J."/>
            <person name="Lyne R."/>
            <person name="Martin S."/>
            <person name="Mashreghi-Mohammadi M."/>
            <person name="Matthews L."/>
            <person name="Matthews N.S.W."/>
            <person name="McLaren S."/>
            <person name="Milne S."/>
            <person name="Mistry S."/>
            <person name="Moore M.J.F."/>
            <person name="Nickerson T."/>
            <person name="O'Dell C.N."/>
            <person name="Oliver K."/>
            <person name="Palmeiri A."/>
            <person name="Palmer S.A."/>
            <person name="Parker A."/>
            <person name="Patel D."/>
            <person name="Pearce A.V."/>
            <person name="Peck A.I."/>
            <person name="Pelan S."/>
            <person name="Phelps K."/>
            <person name="Phillimore B.J."/>
            <person name="Plumb R."/>
            <person name="Rajan J."/>
            <person name="Raymond C."/>
            <person name="Rouse G."/>
            <person name="Saenphimmachak C."/>
            <person name="Sehra H.K."/>
            <person name="Sheridan E."/>
            <person name="Shownkeen R."/>
            <person name="Sims S."/>
            <person name="Skuce C.D."/>
            <person name="Smith M."/>
            <person name="Steward C."/>
            <person name="Subramanian S."/>
            <person name="Sycamore N."/>
            <person name="Tracey A."/>
            <person name="Tromans A."/>
            <person name="Van Helmond Z."/>
            <person name="Wall M."/>
            <person name="Wallis J.M."/>
            <person name="White S."/>
            <person name="Whitehead S.L."/>
            <person name="Wilkinson J.E."/>
            <person name="Willey D.L."/>
            <person name="Williams H."/>
            <person name="Wilming L."/>
            <person name="Wray P.W."/>
            <person name="Wu Z."/>
            <person name="Coulson A."/>
            <person name="Vaudin M."/>
            <person name="Sulston J.E."/>
            <person name="Durbin R.M."/>
            <person name="Hubbard T."/>
            <person name="Wooster R."/>
            <person name="Dunham I."/>
            <person name="Carter N.P."/>
            <person name="McVean G."/>
            <person name="Ross M.T."/>
            <person name="Harrow J."/>
            <person name="Olson M.V."/>
            <person name="Beck S."/>
            <person name="Rogers J."/>
            <person name="Bentley D.R."/>
        </authorList>
    </citation>
    <scope>NUCLEOTIDE SEQUENCE [LARGE SCALE GENOMIC DNA]</scope>
</reference>
<reference key="4">
    <citation type="journal article" date="2004" name="Genome Res.">
        <title>The status, quality, and expansion of the NIH full-length cDNA project: the Mammalian Gene Collection (MGC).</title>
        <authorList>
            <consortium name="The MGC Project Team"/>
        </authorList>
    </citation>
    <scope>NUCLEOTIDE SEQUENCE [LARGE SCALE MRNA] (ISOFORMS 1 AND 2)</scope>
    <scope>VARIANTS TYR-217 AND LEU-464</scope>
</reference>
<reference key="5">
    <citation type="journal article" date="2013" name="J. Proteome Res.">
        <title>Toward a comprehensive characterization of a human cancer cell phosphoproteome.</title>
        <authorList>
            <person name="Zhou H."/>
            <person name="Di Palma S."/>
            <person name="Preisinger C."/>
            <person name="Peng M."/>
            <person name="Polat A.N."/>
            <person name="Heck A.J."/>
            <person name="Mohammed S."/>
        </authorList>
    </citation>
    <scope>PHOSPHORYLATION [LARGE SCALE ANALYSIS] AT SER-438</scope>
    <scope>IDENTIFICATION BY MASS SPECTROMETRY [LARGE SCALE ANALYSIS]</scope>
    <source>
        <tissue>Erythroleukemia</tissue>
    </source>
</reference>